<organism>
    <name type="scientific">Acaryochloris marina (strain MBIC 11017)</name>
    <dbReference type="NCBI Taxonomy" id="329726"/>
    <lineage>
        <taxon>Bacteria</taxon>
        <taxon>Bacillati</taxon>
        <taxon>Cyanobacteriota</taxon>
        <taxon>Cyanophyceae</taxon>
        <taxon>Acaryochloridales</taxon>
        <taxon>Acaryochloridaceae</taxon>
        <taxon>Acaryochloris</taxon>
    </lineage>
</organism>
<comment type="function">
    <text evidence="1">One of the components of the core complex of photosystem II (PSII). PSII is a light-driven water:plastoquinone oxidoreductase that uses light energy to abstract electrons from H(2)O, generating O(2) and a proton gradient subsequently used for ATP formation. It consists of a core antenna complex that captures photons, and an electron transfer chain that converts photonic excitation into a charge separation. This subunit is found at the monomer-monomer interface and is required for correct PSII assembly and/or dimerization.</text>
</comment>
<comment type="subunit">
    <text evidence="1">PSII is composed of 1 copy each of membrane proteins PsbA, PsbB, PsbC, PsbD, PsbE, PsbF, PsbH, PsbI, PsbJ, PsbK, PsbL, PsbM, PsbT, PsbX, PsbY, PsbZ, Psb30/Ycf12, peripheral proteins PsbO, CyanoQ (PsbQ), PsbU, PsbV and a large number of cofactors. It forms dimeric complexes.</text>
</comment>
<comment type="subcellular location">
    <subcellularLocation>
        <location evidence="1">Cellular thylakoid membrane</location>
        <topology evidence="1">Single-pass membrane protein</topology>
    </subcellularLocation>
</comment>
<comment type="similarity">
    <text evidence="1">Belongs to the PsbL family.</text>
</comment>
<dbReference type="EMBL" id="CP000828">
    <property type="protein sequence ID" value="ABW31344.1"/>
    <property type="molecule type" value="Genomic_DNA"/>
</dbReference>
<dbReference type="RefSeq" id="WP_010476186.1">
    <property type="nucleotide sequence ID" value="NC_009925.1"/>
</dbReference>
<dbReference type="PDB" id="7YMI">
    <property type="method" value="EM"/>
    <property type="resolution" value="3.30 A"/>
    <property type="chains" value="L/l=1-38"/>
</dbReference>
<dbReference type="PDB" id="7YMM">
    <property type="method" value="EM"/>
    <property type="resolution" value="3.60 A"/>
    <property type="chains" value="1L/2L/3L/4L=1-38"/>
</dbReference>
<dbReference type="PDBsum" id="7YMI"/>
<dbReference type="PDBsum" id="7YMM"/>
<dbReference type="EMDB" id="EMD-33929"/>
<dbReference type="EMDB" id="EMD-33933"/>
<dbReference type="SMR" id="B0C6T1"/>
<dbReference type="STRING" id="329726.AM1_6425"/>
<dbReference type="KEGG" id="amr:AM1_6425"/>
<dbReference type="eggNOG" id="ENOG5033AKP">
    <property type="taxonomic scope" value="Bacteria"/>
</dbReference>
<dbReference type="HOGENOM" id="CLU_214425_0_0_3"/>
<dbReference type="Proteomes" id="UP000000268">
    <property type="component" value="Chromosome"/>
</dbReference>
<dbReference type="GO" id="GO:0009539">
    <property type="term" value="C:photosystem II reaction center"/>
    <property type="evidence" value="ECO:0007669"/>
    <property type="project" value="InterPro"/>
</dbReference>
<dbReference type="GO" id="GO:0031676">
    <property type="term" value="C:plasma membrane-derived thylakoid membrane"/>
    <property type="evidence" value="ECO:0007669"/>
    <property type="project" value="UniProtKB-SubCell"/>
</dbReference>
<dbReference type="GO" id="GO:0015979">
    <property type="term" value="P:photosynthesis"/>
    <property type="evidence" value="ECO:0007669"/>
    <property type="project" value="UniProtKB-UniRule"/>
</dbReference>
<dbReference type="HAMAP" id="MF_01317">
    <property type="entry name" value="PSII_PsbL"/>
    <property type="match status" value="1"/>
</dbReference>
<dbReference type="InterPro" id="IPR003372">
    <property type="entry name" value="PSII_PsbL"/>
</dbReference>
<dbReference type="InterPro" id="IPR037266">
    <property type="entry name" value="PSII_PsbL_sf"/>
</dbReference>
<dbReference type="NCBIfam" id="NF001972">
    <property type="entry name" value="PRK00753.1"/>
    <property type="match status" value="1"/>
</dbReference>
<dbReference type="Pfam" id="PF02419">
    <property type="entry name" value="PsbL"/>
    <property type="match status" value="1"/>
</dbReference>
<dbReference type="SUPFAM" id="SSF161017">
    <property type="entry name" value="Photosystem II reaction center protein L, PsbL"/>
    <property type="match status" value="1"/>
</dbReference>
<accession>B0C6T1</accession>
<feature type="chain" id="PRO_0000353247" description="Photosystem II reaction center protein L">
    <location>
        <begin position="1"/>
        <end position="38"/>
    </location>
</feature>
<feature type="transmembrane region" description="Helical" evidence="1">
    <location>
        <begin position="17"/>
        <end position="37"/>
    </location>
</feature>
<feature type="helix" evidence="2">
    <location>
        <begin position="15"/>
        <end position="36"/>
    </location>
</feature>
<keyword id="KW-0002">3D-structure</keyword>
<keyword id="KW-0472">Membrane</keyword>
<keyword id="KW-0602">Photosynthesis</keyword>
<keyword id="KW-0604">Photosystem II</keyword>
<keyword id="KW-0674">Reaction center</keyword>
<keyword id="KW-1185">Reference proteome</keyword>
<keyword id="KW-0793">Thylakoid</keyword>
<keyword id="KW-0812">Transmembrane</keyword>
<keyword id="KW-1133">Transmembrane helix</keyword>
<reference key="1">
    <citation type="journal article" date="2008" name="Proc. Natl. Acad. Sci. U.S.A.">
        <title>Niche adaptation and genome expansion in the chlorophyll d-producing cyanobacterium Acaryochloris marina.</title>
        <authorList>
            <person name="Swingley W.D."/>
            <person name="Chen M."/>
            <person name="Cheung P.C."/>
            <person name="Conrad A.L."/>
            <person name="Dejesa L.C."/>
            <person name="Hao J."/>
            <person name="Honchak B.M."/>
            <person name="Karbach L.E."/>
            <person name="Kurdoglu A."/>
            <person name="Lahiri S."/>
            <person name="Mastrian S.D."/>
            <person name="Miyashita H."/>
            <person name="Page L."/>
            <person name="Ramakrishna P."/>
            <person name="Satoh S."/>
            <person name="Sattley W.M."/>
            <person name="Shimada Y."/>
            <person name="Taylor H.L."/>
            <person name="Tomo T."/>
            <person name="Tsuchiya T."/>
            <person name="Wang Z.T."/>
            <person name="Raymond J."/>
            <person name="Mimuro M."/>
            <person name="Blankenship R.E."/>
            <person name="Touchman J.W."/>
        </authorList>
    </citation>
    <scope>NUCLEOTIDE SEQUENCE [LARGE SCALE GENOMIC DNA]</scope>
    <source>
        <strain>MBIC 11017</strain>
    </source>
</reference>
<gene>
    <name evidence="1" type="primary">psbL</name>
    <name type="ordered locus">AM1_6425</name>
</gene>
<protein>
    <recommendedName>
        <fullName evidence="1">Photosystem II reaction center protein L</fullName>
        <shortName evidence="1">PSII-L</shortName>
    </recommendedName>
</protein>
<evidence type="ECO:0000255" key="1">
    <source>
        <dbReference type="HAMAP-Rule" id="MF_01317"/>
    </source>
</evidence>
<evidence type="ECO:0007829" key="2">
    <source>
        <dbReference type="PDB" id="7YMI"/>
    </source>
</evidence>
<name>PSBL_ACAM1</name>
<proteinExistence type="evidence at protein level"/>
<sequence>MATPNPNKQPVELNRASLFIGLLLVLVLALLFSSYFFN</sequence>